<protein>
    <recommendedName>
        <fullName>Antitermination protein Q</fullName>
    </recommendedName>
</protein>
<dbReference type="EMBL" id="AP000363">
    <property type="protein sequence ID" value="BAA84322.1"/>
    <property type="status" value="ALT_INIT"/>
    <property type="molecule type" value="Genomic_DNA"/>
</dbReference>
<dbReference type="RefSeq" id="NP_050538.1">
    <property type="nucleotide sequence ID" value="NC_000902.1"/>
</dbReference>
<dbReference type="SMR" id="P68923"/>
<dbReference type="GeneID" id="1262223"/>
<dbReference type="KEGG" id="vg:1262223"/>
<dbReference type="OrthoDB" id="12574at10239"/>
<dbReference type="Proteomes" id="UP000002665">
    <property type="component" value="Genome"/>
</dbReference>
<dbReference type="GO" id="GO:0003677">
    <property type="term" value="F:DNA binding"/>
    <property type="evidence" value="ECO:0007669"/>
    <property type="project" value="UniProtKB-KW"/>
</dbReference>
<dbReference type="GO" id="GO:0006353">
    <property type="term" value="P:DNA-templated transcription termination"/>
    <property type="evidence" value="ECO:0007669"/>
    <property type="project" value="UniProtKB-KW"/>
</dbReference>
<dbReference type="GO" id="GO:0060567">
    <property type="term" value="P:negative regulation of termination of DNA-templated transcription"/>
    <property type="evidence" value="ECO:0007669"/>
    <property type="project" value="InterPro"/>
</dbReference>
<dbReference type="InterPro" id="IPR010534">
    <property type="entry name" value="Phage_933W_GpQ"/>
</dbReference>
<dbReference type="Pfam" id="PF06530">
    <property type="entry name" value="Phage_antitermQ"/>
    <property type="match status" value="1"/>
</dbReference>
<evidence type="ECO:0000250" key="1"/>
<evidence type="ECO:0000305" key="2"/>
<proteinExistence type="inferred from homology"/>
<reference key="1">
    <citation type="journal article" date="1999" name="DNA Res.">
        <title>Sequence analysis of Stx2-converting phage VT2-Sa shows a great divergence in early regulation and replication regions.</title>
        <authorList>
            <person name="Miyamoto H."/>
            <person name="Nakai W."/>
            <person name="Yajima N."/>
            <person name="Fujibayashi A."/>
            <person name="Higuchi T."/>
            <person name="Sato K."/>
            <person name="Matsushiro A."/>
        </authorList>
    </citation>
    <scope>NUCLEOTIDE SEQUENCE [LARGE SCALE GENOMIC DNA]</scope>
</reference>
<organismHost>
    <name type="scientific">Escherichia coli O157:H7</name>
    <dbReference type="NCBI Taxonomy" id="83334"/>
</organismHost>
<sequence>MRDIRQVLERWGAWAANNYEDVTWSPIAAGFKGLIPEKVKSRPQCCDDDAMVICGCIARLYRNNRDLHDLLVDYYVLGETFMALARKHGCSDTCIGKRLHKAEGIVEGMLMMLGVRLEMDRYVERELPGGRTSVFYQRKNSLRS</sequence>
<comment type="function">
    <text evidence="1">Positively regulates expression of some phage genes. Bacterial host RNA polymerase modified by antitermination proteins transcribes through termination sites that otherwise prevent expression of the regulated genes (By similarity).</text>
</comment>
<comment type="similarity">
    <text evidence="2">Belongs to the phage antitermination Q type 1 family.</text>
</comment>
<comment type="sequence caution" evidence="2">
    <conflict type="erroneous initiation">
        <sequence resource="EMBL-CDS" id="BAA84322"/>
    </conflict>
</comment>
<feature type="chain" id="PRO_0000073888" description="Antitermination protein Q">
    <location>
        <begin position="1"/>
        <end position="144"/>
    </location>
</feature>
<feature type="sequence conflict" description="In Ref. 1." evidence="2" ref="1">
    <original>E</original>
    <variation>G</variation>
    <location>
        <position position="126"/>
    </location>
</feature>
<gene>
    <name type="primary">Q</name>
</gene>
<organism>
    <name type="scientific">Enterobacteria phage VT2-Sa</name>
    <name type="common">Bacteriophage VT2-Sa</name>
    <dbReference type="NCBI Taxonomy" id="97081"/>
    <lineage>
        <taxon>Viruses</taxon>
        <taxon>Duplodnaviria</taxon>
        <taxon>Heunggongvirae</taxon>
        <taxon>Uroviricota</taxon>
        <taxon>Caudoviricetes</taxon>
        <taxon>Sepvirinae</taxon>
        <taxon>Traversvirus</taxon>
        <taxon>Traversvirus II</taxon>
    </lineage>
</organism>
<keyword id="KW-0238">DNA-binding</keyword>
<keyword id="KW-1185">Reference proteome</keyword>
<keyword id="KW-0804">Transcription</keyword>
<keyword id="KW-0805">Transcription regulation</keyword>
<keyword id="KW-0806">Transcription termination</keyword>
<accession>P68923</accession>
<accession>Q9T0Q4</accession>
<accession>Q9ZWW9</accession>
<name>REGQ_BPVT2</name>